<comment type="function">
    <text evidence="2 3">Required for YukE secretion. Probable component or regulator of the ESX/ESAT-6-like secretion system (BsEss).</text>
</comment>
<comment type="disruption phenotype">
    <text evidence="1 2 3">Cells lacking this gene are blocked in YukE secretion (PubMed:23861817, PubMed:24798022). They display an increased bacteriophage SPP1 resistance phenotype (PubMed:15576783).</text>
</comment>
<comment type="similarity">
    <text evidence="4">Belongs to the EsaB family.</text>
</comment>
<keyword id="KW-0002">3D-structure</keyword>
<keyword id="KW-1185">Reference proteome</keyword>
<name>YUKD_BACSU</name>
<sequence>MYIDITIDLKHYNGSVFDLRLSDYHPVKKVIDIAWQAQSVSMPPREGHWIRVVNKDKVFSGECKLSDCGITNGDRLEIL</sequence>
<proteinExistence type="evidence at protein level"/>
<reference key="1">
    <citation type="journal article" date="1997" name="Microbiology">
        <title>A 12kb nucleotide sequence containing the alanine dehydrogenase gene at 279 degree on the Bacillus subtilis chromosome.</title>
        <authorList>
            <person name="Oudega B."/>
            <person name="Vandenbol M."/>
            <person name="Koningstein G."/>
        </authorList>
    </citation>
    <scope>NUCLEOTIDE SEQUENCE [GENOMIC DNA]</scope>
    <source>
        <strain>168</strain>
    </source>
</reference>
<reference key="2">
    <citation type="journal article" date="1997" name="Nature">
        <title>The complete genome sequence of the Gram-positive bacterium Bacillus subtilis.</title>
        <authorList>
            <person name="Kunst F."/>
            <person name="Ogasawara N."/>
            <person name="Moszer I."/>
            <person name="Albertini A.M."/>
            <person name="Alloni G."/>
            <person name="Azevedo V."/>
            <person name="Bertero M.G."/>
            <person name="Bessieres P."/>
            <person name="Bolotin A."/>
            <person name="Borchert S."/>
            <person name="Borriss R."/>
            <person name="Boursier L."/>
            <person name="Brans A."/>
            <person name="Braun M."/>
            <person name="Brignell S.C."/>
            <person name="Bron S."/>
            <person name="Brouillet S."/>
            <person name="Bruschi C.V."/>
            <person name="Caldwell B."/>
            <person name="Capuano V."/>
            <person name="Carter N.M."/>
            <person name="Choi S.-K."/>
            <person name="Codani J.-J."/>
            <person name="Connerton I.F."/>
            <person name="Cummings N.J."/>
            <person name="Daniel R.A."/>
            <person name="Denizot F."/>
            <person name="Devine K.M."/>
            <person name="Duesterhoeft A."/>
            <person name="Ehrlich S.D."/>
            <person name="Emmerson P.T."/>
            <person name="Entian K.-D."/>
            <person name="Errington J."/>
            <person name="Fabret C."/>
            <person name="Ferrari E."/>
            <person name="Foulger D."/>
            <person name="Fritz C."/>
            <person name="Fujita M."/>
            <person name="Fujita Y."/>
            <person name="Fuma S."/>
            <person name="Galizzi A."/>
            <person name="Galleron N."/>
            <person name="Ghim S.-Y."/>
            <person name="Glaser P."/>
            <person name="Goffeau A."/>
            <person name="Golightly E.J."/>
            <person name="Grandi G."/>
            <person name="Guiseppi G."/>
            <person name="Guy B.J."/>
            <person name="Haga K."/>
            <person name="Haiech J."/>
            <person name="Harwood C.R."/>
            <person name="Henaut A."/>
            <person name="Hilbert H."/>
            <person name="Holsappel S."/>
            <person name="Hosono S."/>
            <person name="Hullo M.-F."/>
            <person name="Itaya M."/>
            <person name="Jones L.-M."/>
            <person name="Joris B."/>
            <person name="Karamata D."/>
            <person name="Kasahara Y."/>
            <person name="Klaerr-Blanchard M."/>
            <person name="Klein C."/>
            <person name="Kobayashi Y."/>
            <person name="Koetter P."/>
            <person name="Koningstein G."/>
            <person name="Krogh S."/>
            <person name="Kumano M."/>
            <person name="Kurita K."/>
            <person name="Lapidus A."/>
            <person name="Lardinois S."/>
            <person name="Lauber J."/>
            <person name="Lazarevic V."/>
            <person name="Lee S.-M."/>
            <person name="Levine A."/>
            <person name="Liu H."/>
            <person name="Masuda S."/>
            <person name="Mauel C."/>
            <person name="Medigue C."/>
            <person name="Medina N."/>
            <person name="Mellado R.P."/>
            <person name="Mizuno M."/>
            <person name="Moestl D."/>
            <person name="Nakai S."/>
            <person name="Noback M."/>
            <person name="Noone D."/>
            <person name="O'Reilly M."/>
            <person name="Ogawa K."/>
            <person name="Ogiwara A."/>
            <person name="Oudega B."/>
            <person name="Park S.-H."/>
            <person name="Parro V."/>
            <person name="Pohl T.M."/>
            <person name="Portetelle D."/>
            <person name="Porwollik S."/>
            <person name="Prescott A.M."/>
            <person name="Presecan E."/>
            <person name="Pujic P."/>
            <person name="Purnelle B."/>
            <person name="Rapoport G."/>
            <person name="Rey M."/>
            <person name="Reynolds S."/>
            <person name="Rieger M."/>
            <person name="Rivolta C."/>
            <person name="Rocha E."/>
            <person name="Roche B."/>
            <person name="Rose M."/>
            <person name="Sadaie Y."/>
            <person name="Sato T."/>
            <person name="Scanlan E."/>
            <person name="Schleich S."/>
            <person name="Schroeter R."/>
            <person name="Scoffone F."/>
            <person name="Sekiguchi J."/>
            <person name="Sekowska A."/>
            <person name="Seror S.J."/>
            <person name="Serror P."/>
            <person name="Shin B.-S."/>
            <person name="Soldo B."/>
            <person name="Sorokin A."/>
            <person name="Tacconi E."/>
            <person name="Takagi T."/>
            <person name="Takahashi H."/>
            <person name="Takemaru K."/>
            <person name="Takeuchi M."/>
            <person name="Tamakoshi A."/>
            <person name="Tanaka T."/>
            <person name="Terpstra P."/>
            <person name="Tognoni A."/>
            <person name="Tosato V."/>
            <person name="Uchiyama S."/>
            <person name="Vandenbol M."/>
            <person name="Vannier F."/>
            <person name="Vassarotti A."/>
            <person name="Viari A."/>
            <person name="Wambutt R."/>
            <person name="Wedler E."/>
            <person name="Wedler H."/>
            <person name="Weitzenegger T."/>
            <person name="Winters P."/>
            <person name="Wipat A."/>
            <person name="Yamamoto H."/>
            <person name="Yamane K."/>
            <person name="Yasumoto K."/>
            <person name="Yata K."/>
            <person name="Yoshida K."/>
            <person name="Yoshikawa H.-F."/>
            <person name="Zumstein E."/>
            <person name="Yoshikawa H."/>
            <person name="Danchin A."/>
        </authorList>
    </citation>
    <scope>NUCLEOTIDE SEQUENCE [LARGE SCALE GENOMIC DNA]</scope>
    <source>
        <strain>168</strain>
    </source>
</reference>
<reference key="3">
    <citation type="journal article" date="2004" name="J. Bacteriol.">
        <title>Bacillus subtilis operon encoding a membrane receptor for bacteriophage SPP1.</title>
        <authorList>
            <person name="Sao-Jose C."/>
            <person name="Baptista C."/>
            <person name="Santos M.A."/>
        </authorList>
    </citation>
    <scope>DISRUPTION PHENOTYPE</scope>
    <source>
        <strain>168</strain>
    </source>
</reference>
<reference key="4">
    <citation type="journal article" date="2013" name="PLoS ONE">
        <title>High levels of DegU-P activate an Esat-6-like secretion system in Bacillus subtilis.</title>
        <authorList>
            <person name="Baptista C."/>
            <person name="Barreto H.C."/>
            <person name="Sao-Jose C."/>
        </authorList>
    </citation>
    <scope>FUNCTION</scope>
    <scope>DISRUPTION PHENOTYPE</scope>
    <source>
        <strain>168</strain>
        <strain>ATCC 6051</strain>
    </source>
</reference>
<reference key="5">
    <citation type="journal article" date="2014" name="PLoS ONE">
        <title>The ESX system in Bacillus subtilis mediates protein secretion.</title>
        <authorList>
            <person name="Huppert L.A."/>
            <person name="Ramsdell T.L."/>
            <person name="Chase M.R."/>
            <person name="Sarracino D.A."/>
            <person name="Fortune S.M."/>
            <person name="Burton B.M."/>
        </authorList>
    </citation>
    <scope>FUNCTION</scope>
    <scope>DISRUPTION PHENOTYPE</scope>
    <source>
        <strain>168 / PY79</strain>
    </source>
</reference>
<reference key="6">
    <citation type="journal article" date="2005" name="FEBS Lett.">
        <title>Crystal structure of the ubiquitin-like protein YukD from Bacillus subtilis.</title>
        <authorList>
            <person name="van den Ent F."/>
            <person name="Loewe J."/>
        </authorList>
    </citation>
    <scope>X-RAY CRYSTALLOGRAPHY (2.7 ANGSTROMS) OF 2-79</scope>
    <source>
        <strain>168</strain>
    </source>
</reference>
<dbReference type="EMBL" id="Z82015">
    <property type="protein sequence ID" value="CAB04772.1"/>
    <property type="molecule type" value="Genomic_DNA"/>
</dbReference>
<dbReference type="EMBL" id="AL009126">
    <property type="protein sequence ID" value="CAB15178.1"/>
    <property type="molecule type" value="Genomic_DNA"/>
</dbReference>
<dbReference type="PIR" id="F70013">
    <property type="entry name" value="F70013"/>
</dbReference>
<dbReference type="RefSeq" id="NP_391068.1">
    <property type="nucleotide sequence ID" value="NC_000964.3"/>
</dbReference>
<dbReference type="RefSeq" id="WP_003228763.1">
    <property type="nucleotide sequence ID" value="NZ_OZ025638.1"/>
</dbReference>
<dbReference type="PDB" id="2BPS">
    <property type="method" value="X-ray"/>
    <property type="resolution" value="2.70 A"/>
    <property type="chains" value="A/B=2-79"/>
</dbReference>
<dbReference type="PDBsum" id="2BPS"/>
<dbReference type="SMR" id="P71071"/>
<dbReference type="FunCoup" id="P71071">
    <property type="interactions" value="10"/>
</dbReference>
<dbReference type="STRING" id="224308.BSU31900"/>
<dbReference type="PaxDb" id="224308-BSU31900"/>
<dbReference type="EnsemblBacteria" id="CAB15178">
    <property type="protein sequence ID" value="CAB15178"/>
    <property type="gene ID" value="BSU_31900"/>
</dbReference>
<dbReference type="GeneID" id="936543"/>
<dbReference type="KEGG" id="bsu:BSU31900"/>
<dbReference type="PATRIC" id="fig|224308.179.peg.3455"/>
<dbReference type="eggNOG" id="COG5417">
    <property type="taxonomic scope" value="Bacteria"/>
</dbReference>
<dbReference type="InParanoid" id="P71071"/>
<dbReference type="OrthoDB" id="2437963at2"/>
<dbReference type="BioCyc" id="BSUB:BSU31900-MONOMER"/>
<dbReference type="EvolutionaryTrace" id="P71071"/>
<dbReference type="Proteomes" id="UP000001570">
    <property type="component" value="Chromosome"/>
</dbReference>
<dbReference type="Gene3D" id="3.10.20.90">
    <property type="entry name" value="Phosphatidylinositol 3-kinase Catalytic Subunit, Chain A, domain 1"/>
    <property type="match status" value="1"/>
</dbReference>
<dbReference type="InterPro" id="IPR014921">
    <property type="entry name" value="EsaB"/>
</dbReference>
<dbReference type="InterPro" id="IPR029071">
    <property type="entry name" value="Ubiquitin-like_domsf"/>
</dbReference>
<dbReference type="InterPro" id="IPR024962">
    <property type="entry name" value="YukD-like"/>
</dbReference>
<dbReference type="Pfam" id="PF08817">
    <property type="entry name" value="YukD"/>
    <property type="match status" value="1"/>
</dbReference>
<dbReference type="PIRSF" id="PIRSF037793">
    <property type="entry name" value="DUF_ubiquitin-like_YukD"/>
    <property type="match status" value="1"/>
</dbReference>
<dbReference type="SUPFAM" id="SSF54236">
    <property type="entry name" value="Ubiquitin-like"/>
    <property type="match status" value="1"/>
</dbReference>
<feature type="chain" id="PRO_0000360174" description="ESX secretion system protein YukD">
    <location>
        <begin position="1"/>
        <end position="79"/>
    </location>
</feature>
<feature type="strand" evidence="5">
    <location>
        <begin position="2"/>
        <end position="8"/>
    </location>
</feature>
<feature type="turn" evidence="5">
    <location>
        <begin position="10"/>
        <end position="13"/>
    </location>
</feature>
<feature type="strand" evidence="5">
    <location>
        <begin position="16"/>
        <end position="22"/>
    </location>
</feature>
<feature type="helix" evidence="5">
    <location>
        <begin position="29"/>
        <end position="37"/>
    </location>
</feature>
<feature type="strand" evidence="5">
    <location>
        <begin position="49"/>
        <end position="52"/>
    </location>
</feature>
<feature type="helix" evidence="5">
    <location>
        <begin position="53"/>
        <end position="55"/>
    </location>
</feature>
<feature type="strand" evidence="5">
    <location>
        <begin position="57"/>
        <end position="60"/>
    </location>
</feature>
<feature type="helix" evidence="5">
    <location>
        <begin position="66"/>
        <end position="68"/>
    </location>
</feature>
<feature type="strand" evidence="5">
    <location>
        <begin position="75"/>
        <end position="78"/>
    </location>
</feature>
<accession>P71071</accession>
<accession>Q795L3</accession>
<gene>
    <name type="primary">yukD</name>
    <name type="ordered locus">BSU31900</name>
</gene>
<evidence type="ECO:0000269" key="1">
    <source>
    </source>
</evidence>
<evidence type="ECO:0000269" key="2">
    <source>
    </source>
</evidence>
<evidence type="ECO:0000269" key="3">
    <source>
    </source>
</evidence>
<evidence type="ECO:0000305" key="4"/>
<evidence type="ECO:0007829" key="5">
    <source>
        <dbReference type="PDB" id="2BPS"/>
    </source>
</evidence>
<protein>
    <recommendedName>
        <fullName evidence="4">ESX secretion system protein YukD</fullName>
    </recommendedName>
</protein>
<organism>
    <name type="scientific">Bacillus subtilis (strain 168)</name>
    <dbReference type="NCBI Taxonomy" id="224308"/>
    <lineage>
        <taxon>Bacteria</taxon>
        <taxon>Bacillati</taxon>
        <taxon>Bacillota</taxon>
        <taxon>Bacilli</taxon>
        <taxon>Bacillales</taxon>
        <taxon>Bacillaceae</taxon>
        <taxon>Bacillus</taxon>
    </lineage>
</organism>